<accession>A3CZA5</accession>
<keyword id="KW-0456">Lyase</keyword>
<keyword id="KW-0501">Molybdenum cofactor biosynthesis</keyword>
<keyword id="KW-1185">Reference proteome</keyword>
<protein>
    <recommendedName>
        <fullName evidence="1">Cyclic pyranopterin monophosphate synthase</fullName>
        <ecNumber evidence="1">4.6.1.17</ecNumber>
    </recommendedName>
    <alternativeName>
        <fullName evidence="1">Molybdenum cofactor biosynthesis protein C</fullName>
    </alternativeName>
</protein>
<dbReference type="EC" id="4.6.1.17" evidence="1"/>
<dbReference type="EMBL" id="CP000563">
    <property type="protein sequence ID" value="ABN59818.1"/>
    <property type="molecule type" value="Genomic_DNA"/>
</dbReference>
<dbReference type="RefSeq" id="WP_006079755.1">
    <property type="nucleotide sequence ID" value="NC_009052.1"/>
</dbReference>
<dbReference type="SMR" id="A3CZA5"/>
<dbReference type="STRING" id="325240.Sbal_0285"/>
<dbReference type="GeneID" id="67441848"/>
<dbReference type="KEGG" id="sbl:Sbal_0285"/>
<dbReference type="HOGENOM" id="CLU_074693_1_1_6"/>
<dbReference type="OrthoDB" id="9794429at2"/>
<dbReference type="UniPathway" id="UPA00344"/>
<dbReference type="Proteomes" id="UP000001557">
    <property type="component" value="Chromosome"/>
</dbReference>
<dbReference type="GO" id="GO:0061799">
    <property type="term" value="F:cyclic pyranopterin monophosphate synthase activity"/>
    <property type="evidence" value="ECO:0007669"/>
    <property type="project" value="UniProtKB-UniRule"/>
</dbReference>
<dbReference type="GO" id="GO:0061798">
    <property type="term" value="F:GTP 3',8'-cyclase activity"/>
    <property type="evidence" value="ECO:0007669"/>
    <property type="project" value="TreeGrafter"/>
</dbReference>
<dbReference type="GO" id="GO:0006777">
    <property type="term" value="P:Mo-molybdopterin cofactor biosynthetic process"/>
    <property type="evidence" value="ECO:0007669"/>
    <property type="project" value="UniProtKB-UniRule"/>
</dbReference>
<dbReference type="CDD" id="cd01420">
    <property type="entry name" value="MoaC_PE"/>
    <property type="match status" value="1"/>
</dbReference>
<dbReference type="FunFam" id="3.30.70.640:FF:000001">
    <property type="entry name" value="Cyclic pyranopterin monophosphate synthase"/>
    <property type="match status" value="1"/>
</dbReference>
<dbReference type="Gene3D" id="3.30.70.640">
    <property type="entry name" value="Molybdopterin cofactor biosynthesis C (MoaC) domain"/>
    <property type="match status" value="1"/>
</dbReference>
<dbReference type="HAMAP" id="MF_01224_B">
    <property type="entry name" value="MoaC_B"/>
    <property type="match status" value="1"/>
</dbReference>
<dbReference type="InterPro" id="IPR023045">
    <property type="entry name" value="MoaC"/>
</dbReference>
<dbReference type="InterPro" id="IPR047594">
    <property type="entry name" value="MoaC_bact/euk"/>
</dbReference>
<dbReference type="InterPro" id="IPR036522">
    <property type="entry name" value="MoaC_sf"/>
</dbReference>
<dbReference type="InterPro" id="IPR050105">
    <property type="entry name" value="MoCo_biosynth_MoaA/MoaC"/>
</dbReference>
<dbReference type="InterPro" id="IPR002820">
    <property type="entry name" value="Mopterin_CF_biosynth-C_dom"/>
</dbReference>
<dbReference type="NCBIfam" id="TIGR00581">
    <property type="entry name" value="moaC"/>
    <property type="match status" value="1"/>
</dbReference>
<dbReference type="NCBIfam" id="NF006870">
    <property type="entry name" value="PRK09364.1"/>
    <property type="match status" value="1"/>
</dbReference>
<dbReference type="PANTHER" id="PTHR22960:SF0">
    <property type="entry name" value="MOLYBDENUM COFACTOR BIOSYNTHESIS PROTEIN 1"/>
    <property type="match status" value="1"/>
</dbReference>
<dbReference type="PANTHER" id="PTHR22960">
    <property type="entry name" value="MOLYBDOPTERIN COFACTOR SYNTHESIS PROTEIN A"/>
    <property type="match status" value="1"/>
</dbReference>
<dbReference type="Pfam" id="PF01967">
    <property type="entry name" value="MoaC"/>
    <property type="match status" value="1"/>
</dbReference>
<dbReference type="SUPFAM" id="SSF55040">
    <property type="entry name" value="Molybdenum cofactor biosynthesis protein C, MoaC"/>
    <property type="match status" value="1"/>
</dbReference>
<reference key="1">
    <citation type="submission" date="2007-02" db="EMBL/GenBank/DDBJ databases">
        <title>Complete sequence of chromosome of Shewanella baltica OS155.</title>
        <authorList>
            <consortium name="US DOE Joint Genome Institute"/>
            <person name="Copeland A."/>
            <person name="Lucas S."/>
            <person name="Lapidus A."/>
            <person name="Barry K."/>
            <person name="Detter J.C."/>
            <person name="Glavina del Rio T."/>
            <person name="Hammon N."/>
            <person name="Israni S."/>
            <person name="Dalin E."/>
            <person name="Tice H."/>
            <person name="Pitluck S."/>
            <person name="Sims D.R."/>
            <person name="Brettin T."/>
            <person name="Bruce D."/>
            <person name="Han C."/>
            <person name="Tapia R."/>
            <person name="Brainard J."/>
            <person name="Schmutz J."/>
            <person name="Larimer F."/>
            <person name="Land M."/>
            <person name="Hauser L."/>
            <person name="Kyrpides N."/>
            <person name="Mikhailova N."/>
            <person name="Brettar I."/>
            <person name="Klappenbach J."/>
            <person name="Konstantinidis K."/>
            <person name="Rodrigues J."/>
            <person name="Tiedje J."/>
            <person name="Richardson P."/>
        </authorList>
    </citation>
    <scope>NUCLEOTIDE SEQUENCE [LARGE SCALE GENOMIC DNA]</scope>
    <source>
        <strain>OS155 / ATCC BAA-1091</strain>
    </source>
</reference>
<organism>
    <name type="scientific">Shewanella baltica (strain OS155 / ATCC BAA-1091)</name>
    <dbReference type="NCBI Taxonomy" id="325240"/>
    <lineage>
        <taxon>Bacteria</taxon>
        <taxon>Pseudomonadati</taxon>
        <taxon>Pseudomonadota</taxon>
        <taxon>Gammaproteobacteria</taxon>
        <taxon>Alteromonadales</taxon>
        <taxon>Shewanellaceae</taxon>
        <taxon>Shewanella</taxon>
    </lineage>
</organism>
<feature type="chain" id="PRO_1000054134" description="Cyclic pyranopterin monophosphate synthase">
    <location>
        <begin position="1"/>
        <end position="158"/>
    </location>
</feature>
<feature type="active site" evidence="1">
    <location>
        <position position="129"/>
    </location>
</feature>
<feature type="binding site" evidence="1">
    <location>
        <begin position="76"/>
        <end position="78"/>
    </location>
    <ligand>
        <name>substrate</name>
    </ligand>
</feature>
<feature type="binding site" evidence="1">
    <location>
        <begin position="114"/>
        <end position="115"/>
    </location>
    <ligand>
        <name>substrate</name>
    </ligand>
</feature>
<evidence type="ECO:0000255" key="1">
    <source>
        <dbReference type="HAMAP-Rule" id="MF_01224"/>
    </source>
</evidence>
<gene>
    <name evidence="1" type="primary">moaC</name>
    <name type="ordered locus">Sbal_0285</name>
</gene>
<name>MOAC_SHEB5</name>
<proteinExistence type="inferred from homology"/>
<sequence>MSNVFTHINADGNAHMVDVTEKAVTEREARAEAFIEMASTTLEMIMSGSHHKGDVFATARIAGIQAAKKTSDLIPLCHPLMLTKVEVDLEAQPEHNRVRITSLCKLSGKTGVEMEALTAASVAALTIYDMCKAVQKDMVISQVRLLEKRGGKSGHFKV</sequence>
<comment type="function">
    <text evidence="1">Catalyzes the conversion of (8S)-3',8-cyclo-7,8-dihydroguanosine 5'-triphosphate to cyclic pyranopterin monophosphate (cPMP).</text>
</comment>
<comment type="catalytic activity">
    <reaction evidence="1">
        <text>(8S)-3',8-cyclo-7,8-dihydroguanosine 5'-triphosphate = cyclic pyranopterin phosphate + diphosphate</text>
        <dbReference type="Rhea" id="RHEA:49580"/>
        <dbReference type="ChEBI" id="CHEBI:33019"/>
        <dbReference type="ChEBI" id="CHEBI:59648"/>
        <dbReference type="ChEBI" id="CHEBI:131766"/>
        <dbReference type="EC" id="4.6.1.17"/>
    </reaction>
</comment>
<comment type="pathway">
    <text evidence="1">Cofactor biosynthesis; molybdopterin biosynthesis.</text>
</comment>
<comment type="subunit">
    <text evidence="1">Homohexamer; trimer of dimers.</text>
</comment>
<comment type="similarity">
    <text evidence="1">Belongs to the MoaC family.</text>
</comment>